<evidence type="ECO:0000256" key="1">
    <source>
        <dbReference type="SAM" id="MobiDB-lite"/>
    </source>
</evidence>
<evidence type="ECO:0000305" key="2"/>
<proteinExistence type="predicted"/>
<organism>
    <name type="scientific">Arabidopsis thaliana</name>
    <name type="common">Mouse-ear cress</name>
    <dbReference type="NCBI Taxonomy" id="3702"/>
    <lineage>
        <taxon>Eukaryota</taxon>
        <taxon>Viridiplantae</taxon>
        <taxon>Streptophyta</taxon>
        <taxon>Embryophyta</taxon>
        <taxon>Tracheophyta</taxon>
        <taxon>Spermatophyta</taxon>
        <taxon>Magnoliopsida</taxon>
        <taxon>eudicotyledons</taxon>
        <taxon>Gunneridae</taxon>
        <taxon>Pentapetalae</taxon>
        <taxon>rosids</taxon>
        <taxon>malvids</taxon>
        <taxon>Brassicales</taxon>
        <taxon>Brassicaceae</taxon>
        <taxon>Camelineae</taxon>
        <taxon>Arabidopsis</taxon>
    </lineage>
</organism>
<reference key="1">
    <citation type="journal article" date="1999" name="Nature">
        <title>Sequence and analysis of chromosome 4 of the plant Arabidopsis thaliana.</title>
        <authorList>
            <person name="Mayer K.F.X."/>
            <person name="Schueller C."/>
            <person name="Wambutt R."/>
            <person name="Murphy G."/>
            <person name="Volckaert G."/>
            <person name="Pohl T."/>
            <person name="Duesterhoeft A."/>
            <person name="Stiekema W."/>
            <person name="Entian K.-D."/>
            <person name="Terryn N."/>
            <person name="Harris B."/>
            <person name="Ansorge W."/>
            <person name="Brandt P."/>
            <person name="Grivell L.A."/>
            <person name="Rieger M."/>
            <person name="Weichselgartner M."/>
            <person name="de Simone V."/>
            <person name="Obermaier B."/>
            <person name="Mache R."/>
            <person name="Mueller M."/>
            <person name="Kreis M."/>
            <person name="Delseny M."/>
            <person name="Puigdomenech P."/>
            <person name="Watson M."/>
            <person name="Schmidtheini T."/>
            <person name="Reichert B."/>
            <person name="Portetelle D."/>
            <person name="Perez-Alonso M."/>
            <person name="Boutry M."/>
            <person name="Bancroft I."/>
            <person name="Vos P."/>
            <person name="Hoheisel J."/>
            <person name="Zimmermann W."/>
            <person name="Wedler H."/>
            <person name="Ridley P."/>
            <person name="Langham S.-A."/>
            <person name="McCullagh B."/>
            <person name="Bilham L."/>
            <person name="Robben J."/>
            <person name="van der Schueren J."/>
            <person name="Grymonprez B."/>
            <person name="Chuang Y.-J."/>
            <person name="Vandenbussche F."/>
            <person name="Braeken M."/>
            <person name="Weltjens I."/>
            <person name="Voet M."/>
            <person name="Bastiaens I."/>
            <person name="Aert R."/>
            <person name="Defoor E."/>
            <person name="Weitzenegger T."/>
            <person name="Bothe G."/>
            <person name="Ramsperger U."/>
            <person name="Hilbert H."/>
            <person name="Braun M."/>
            <person name="Holzer E."/>
            <person name="Brandt A."/>
            <person name="Peters S."/>
            <person name="van Staveren M."/>
            <person name="Dirkse W."/>
            <person name="Mooijman P."/>
            <person name="Klein Lankhorst R."/>
            <person name="Rose M."/>
            <person name="Hauf J."/>
            <person name="Koetter P."/>
            <person name="Berneiser S."/>
            <person name="Hempel S."/>
            <person name="Feldpausch M."/>
            <person name="Lamberth S."/>
            <person name="Van den Daele H."/>
            <person name="De Keyser A."/>
            <person name="Buysshaert C."/>
            <person name="Gielen J."/>
            <person name="Villarroel R."/>
            <person name="De Clercq R."/>
            <person name="van Montagu M."/>
            <person name="Rogers J."/>
            <person name="Cronin A."/>
            <person name="Quail M.A."/>
            <person name="Bray-Allen S."/>
            <person name="Clark L."/>
            <person name="Doggett J."/>
            <person name="Hall S."/>
            <person name="Kay M."/>
            <person name="Lennard N."/>
            <person name="McLay K."/>
            <person name="Mayes R."/>
            <person name="Pettett A."/>
            <person name="Rajandream M.A."/>
            <person name="Lyne M."/>
            <person name="Benes V."/>
            <person name="Rechmann S."/>
            <person name="Borkova D."/>
            <person name="Bloecker H."/>
            <person name="Scharfe M."/>
            <person name="Grimm M."/>
            <person name="Loehnert T.-H."/>
            <person name="Dose S."/>
            <person name="de Haan M."/>
            <person name="Maarse A.C."/>
            <person name="Schaefer M."/>
            <person name="Mueller-Auer S."/>
            <person name="Gabel C."/>
            <person name="Fuchs M."/>
            <person name="Fartmann B."/>
            <person name="Granderath K."/>
            <person name="Dauner D."/>
            <person name="Herzl A."/>
            <person name="Neumann S."/>
            <person name="Argiriou A."/>
            <person name="Vitale D."/>
            <person name="Liguori R."/>
            <person name="Piravandi E."/>
            <person name="Massenet O."/>
            <person name="Quigley F."/>
            <person name="Clabauld G."/>
            <person name="Muendlein A."/>
            <person name="Felber R."/>
            <person name="Schnabl S."/>
            <person name="Hiller R."/>
            <person name="Schmidt W."/>
            <person name="Lecharny A."/>
            <person name="Aubourg S."/>
            <person name="Chefdor F."/>
            <person name="Cooke R."/>
            <person name="Berger C."/>
            <person name="Monfort A."/>
            <person name="Casacuberta E."/>
            <person name="Gibbons T."/>
            <person name="Weber N."/>
            <person name="Vandenbol M."/>
            <person name="Bargues M."/>
            <person name="Terol J."/>
            <person name="Torres A."/>
            <person name="Perez-Perez A."/>
            <person name="Purnelle B."/>
            <person name="Bent E."/>
            <person name="Johnson S."/>
            <person name="Tacon D."/>
            <person name="Jesse T."/>
            <person name="Heijnen L."/>
            <person name="Schwarz S."/>
            <person name="Scholler P."/>
            <person name="Heber S."/>
            <person name="Francs P."/>
            <person name="Bielke C."/>
            <person name="Frishman D."/>
            <person name="Haase D."/>
            <person name="Lemcke K."/>
            <person name="Mewes H.-W."/>
            <person name="Stocker S."/>
            <person name="Zaccaria P."/>
            <person name="Bevan M."/>
            <person name="Wilson R.K."/>
            <person name="de la Bastide M."/>
            <person name="Habermann K."/>
            <person name="Parnell L."/>
            <person name="Dedhia N."/>
            <person name="Gnoj L."/>
            <person name="Schutz K."/>
            <person name="Huang E."/>
            <person name="Spiegel L."/>
            <person name="Sekhon M."/>
            <person name="Murray J."/>
            <person name="Sheet P."/>
            <person name="Cordes M."/>
            <person name="Abu-Threideh J."/>
            <person name="Stoneking T."/>
            <person name="Kalicki J."/>
            <person name="Graves T."/>
            <person name="Harmon G."/>
            <person name="Edwards J."/>
            <person name="Latreille P."/>
            <person name="Courtney L."/>
            <person name="Cloud J."/>
            <person name="Abbott A."/>
            <person name="Scott K."/>
            <person name="Johnson D."/>
            <person name="Minx P."/>
            <person name="Bentley D."/>
            <person name="Fulton B."/>
            <person name="Miller N."/>
            <person name="Greco T."/>
            <person name="Kemp K."/>
            <person name="Kramer J."/>
            <person name="Fulton L."/>
            <person name="Mardis E."/>
            <person name="Dante M."/>
            <person name="Pepin K."/>
            <person name="Hillier L.W."/>
            <person name="Nelson J."/>
            <person name="Spieth J."/>
            <person name="Ryan E."/>
            <person name="Andrews S."/>
            <person name="Geisel C."/>
            <person name="Layman D."/>
            <person name="Du H."/>
            <person name="Ali J."/>
            <person name="Berghoff A."/>
            <person name="Jones K."/>
            <person name="Drone K."/>
            <person name="Cotton M."/>
            <person name="Joshu C."/>
            <person name="Antonoiu B."/>
            <person name="Zidanic M."/>
            <person name="Strong C."/>
            <person name="Sun H."/>
            <person name="Lamar B."/>
            <person name="Yordan C."/>
            <person name="Ma P."/>
            <person name="Zhong J."/>
            <person name="Preston R."/>
            <person name="Vil D."/>
            <person name="Shekher M."/>
            <person name="Matero A."/>
            <person name="Shah R."/>
            <person name="Swaby I.K."/>
            <person name="O'Shaughnessy A."/>
            <person name="Rodriguez M."/>
            <person name="Hoffman J."/>
            <person name="Till S."/>
            <person name="Granat S."/>
            <person name="Shohdy N."/>
            <person name="Hasegawa A."/>
            <person name="Hameed A."/>
            <person name="Lodhi M."/>
            <person name="Johnson A."/>
            <person name="Chen E."/>
            <person name="Marra M.A."/>
            <person name="Martienssen R."/>
            <person name="McCombie W.R."/>
        </authorList>
    </citation>
    <scope>NUCLEOTIDE SEQUENCE [LARGE SCALE GENOMIC DNA]</scope>
    <source>
        <strain>cv. Columbia</strain>
    </source>
</reference>
<reference key="2">
    <citation type="journal article" date="2017" name="Plant J.">
        <title>Araport11: a complete reannotation of the Arabidopsis thaliana reference genome.</title>
        <authorList>
            <person name="Cheng C.Y."/>
            <person name="Krishnakumar V."/>
            <person name="Chan A.P."/>
            <person name="Thibaud-Nissen F."/>
            <person name="Schobel S."/>
            <person name="Town C.D."/>
        </authorList>
    </citation>
    <scope>GENOME REANNOTATION</scope>
    <source>
        <strain>cv. Columbia</strain>
    </source>
</reference>
<accession>P0CB21</accession>
<accession>O65589</accession>
<comment type="sequence caution" evidence="2">
    <conflict type="erroneous gene model prediction">
        <sequence resource="EMBL-CDS" id="CAA18225"/>
    </conflict>
    <text>The predicted gene has been split into 2 genes: At4g26450 and At4g26455.</text>
</comment>
<comment type="sequence caution" evidence="2">
    <conflict type="erroneous gene model prediction">
        <sequence resource="EMBL-CDS" id="CAB79500"/>
    </conflict>
    <text>The predicted gene has been split into 2 genes: At4g26450 and At4g26455.</text>
</comment>
<feature type="chain" id="PRO_0000381767" description="Uncharacterized protein At4g26450">
    <location>
        <begin position="1"/>
        <end position="708"/>
    </location>
</feature>
<feature type="region of interest" description="Disordered" evidence="1">
    <location>
        <begin position="1"/>
        <end position="79"/>
    </location>
</feature>
<feature type="region of interest" description="Disordered" evidence="1">
    <location>
        <begin position="119"/>
        <end position="301"/>
    </location>
</feature>
<feature type="region of interest" description="Disordered" evidence="1">
    <location>
        <begin position="349"/>
        <end position="390"/>
    </location>
</feature>
<feature type="region of interest" description="Disordered" evidence="1">
    <location>
        <begin position="410"/>
        <end position="461"/>
    </location>
</feature>
<feature type="compositionally biased region" description="Pro residues" evidence="1">
    <location>
        <begin position="65"/>
        <end position="74"/>
    </location>
</feature>
<feature type="compositionally biased region" description="Polar residues" evidence="1">
    <location>
        <begin position="238"/>
        <end position="249"/>
    </location>
</feature>
<feature type="compositionally biased region" description="Low complexity" evidence="1">
    <location>
        <begin position="260"/>
        <end position="274"/>
    </location>
</feature>
<feature type="compositionally biased region" description="Polar residues" evidence="1">
    <location>
        <begin position="410"/>
        <end position="419"/>
    </location>
</feature>
<feature type="compositionally biased region" description="Basic and acidic residues" evidence="1">
    <location>
        <begin position="442"/>
        <end position="461"/>
    </location>
</feature>
<dbReference type="EMBL" id="AL022223">
    <property type="protein sequence ID" value="CAA18225.1"/>
    <property type="status" value="ALT_SEQ"/>
    <property type="molecule type" value="Genomic_DNA"/>
</dbReference>
<dbReference type="EMBL" id="AL161565">
    <property type="protein sequence ID" value="CAB79500.1"/>
    <property type="status" value="ALT_SEQ"/>
    <property type="molecule type" value="Genomic_DNA"/>
</dbReference>
<dbReference type="EMBL" id="CP002687">
    <property type="protein sequence ID" value="AEE85200.1"/>
    <property type="molecule type" value="Genomic_DNA"/>
</dbReference>
<dbReference type="EMBL" id="CP002687">
    <property type="protein sequence ID" value="ANM66649.1"/>
    <property type="molecule type" value="Genomic_DNA"/>
</dbReference>
<dbReference type="RefSeq" id="NP_001320070.1">
    <property type="nucleotide sequence ID" value="NM_001341799.1"/>
</dbReference>
<dbReference type="RefSeq" id="NP_194375.4">
    <property type="nucleotide sequence ID" value="NM_118778.5"/>
</dbReference>
<dbReference type="BioGRID" id="14038">
    <property type="interactions" value="64"/>
</dbReference>
<dbReference type="FunCoup" id="P0CB21">
    <property type="interactions" value="2882"/>
</dbReference>
<dbReference type="IntAct" id="P0CB21">
    <property type="interactions" value="1"/>
</dbReference>
<dbReference type="STRING" id="3702.P0CB21"/>
<dbReference type="iPTMnet" id="P0CB21"/>
<dbReference type="PaxDb" id="3702-AT4G26450.1"/>
<dbReference type="ProteomicsDB" id="243002"/>
<dbReference type="EnsemblPlants" id="AT4G26450.1">
    <property type="protein sequence ID" value="AT4G26450.1"/>
    <property type="gene ID" value="AT4G26450"/>
</dbReference>
<dbReference type="EnsemblPlants" id="AT4G26450.2">
    <property type="protein sequence ID" value="AT4G26450.2"/>
    <property type="gene ID" value="AT4G26450"/>
</dbReference>
<dbReference type="GeneID" id="828751"/>
<dbReference type="Gramene" id="AT4G26450.1">
    <property type="protein sequence ID" value="AT4G26450.1"/>
    <property type="gene ID" value="AT4G26450"/>
</dbReference>
<dbReference type="Gramene" id="AT4G26450.2">
    <property type="protein sequence ID" value="AT4G26450.2"/>
    <property type="gene ID" value="AT4G26450"/>
</dbReference>
<dbReference type="KEGG" id="ath:AT4G26450"/>
<dbReference type="Araport" id="AT4G26450"/>
<dbReference type="TAIR" id="AT4G26450"/>
<dbReference type="eggNOG" id="ENOG502RBS8">
    <property type="taxonomic scope" value="Eukaryota"/>
</dbReference>
<dbReference type="HOGENOM" id="CLU_426058_0_0_1"/>
<dbReference type="InParanoid" id="P0CB21"/>
<dbReference type="OMA" id="MSSNCNT"/>
<dbReference type="PhylomeDB" id="P0CB21"/>
<dbReference type="PRO" id="PR:P0CB21"/>
<dbReference type="Proteomes" id="UP000006548">
    <property type="component" value="Chromosome 4"/>
</dbReference>
<dbReference type="ExpressionAtlas" id="P0CB21">
    <property type="expression patterns" value="baseline and differential"/>
</dbReference>
<dbReference type="InterPro" id="IPR040276">
    <property type="entry name" value="At4g26450-like"/>
</dbReference>
<dbReference type="PANTHER" id="PTHR36056">
    <property type="entry name" value="PROTEIN, PUTATIVE-RELATED"/>
    <property type="match status" value="1"/>
</dbReference>
<dbReference type="PANTHER" id="PTHR36056:SF1">
    <property type="entry name" value="PROTEIN, PUTATIVE-RELATED"/>
    <property type="match status" value="1"/>
</dbReference>
<sequence>MHARQRNVGNGYRSGSIGMGMSGSRISPERPMRGHGFYGSEHQHRGFNRGYGRGRGRSKSYHNQLPPPLPPPPVQRRSSGGDVFMEAGRLATEYLVSQGVLPQTVLSSKWQNGNFRKQAGEFQSSRSQEEARMDVSAPAAEKRRYIDGYSSAGSRNSLKGRRSHRYDSDFGRSGSWSERSKAFETETGDDSVSGHQEEQPLAEDIASSVQRSASGEFMRKCEGAGDSESVLDKYNLQDEAQSKTGSSSAGKDIVQDCEISKVSEGSSSLSAGSGEMKGRSGGNGGEDENQTAIEDGSIHQRCEDASIDQQCGADESFTKSGIDLATLCKFEKVPTRTRSSLTAKGPKLYLSHNIKDTSHNSGLEEEDQTENRCETRGQSSGKADSTGDENDQVEDFALVQYIENSKCHRSNSFPSSILRDNSEKESGLELPNLHRSHSVGKVGEKRPGEGSDLEEGSKRQRDWVAVSEANERFNMFKTSGNQCDPEEEGKTSSFNKRLIDGAAGKRVSHESLVNNSTYNRTHTGRTGPGYAEEHQLFPASFKMCDLNLGGASDVNDGIKESRQAVDFDLSISSSSKSLEFGTSTRMSNGKEIEVINLDDDQEVVKSSNDPGRKQEAAPYMGIDDVPDYNERLMMVEYLDSFTPINQGTSSVPQNNNTVSLQDREGAIGNDQVPNNTDDDSIFMSLGEIPLTFLQAWDQPPARGYEKPF</sequence>
<protein>
    <recommendedName>
        <fullName>Uncharacterized protein At4g26450</fullName>
    </recommendedName>
</protein>
<name>Y4645_ARATH</name>
<keyword id="KW-1185">Reference proteome</keyword>
<gene>
    <name type="ordered locus">At4g26450</name>
    <name type="ORF">M3E9.120</name>
</gene>